<comment type="function">
    <text evidence="1">Involved in the de novo purine biosynthesis. Catalyzes the transfer of formate to 5-phospho-ribosyl-glycinamide (GAR), producing 5-phospho-ribosyl-N-formylglycinamide (FGAR). Formate is provided by PurU via hydrolysis of 10-formyl-tetrahydrofolate.</text>
</comment>
<comment type="catalytic activity">
    <reaction evidence="1">
        <text>N(1)-(5-phospho-beta-D-ribosyl)glycinamide + formate + ATP = N(2)-formyl-N(1)-(5-phospho-beta-D-ribosyl)glycinamide + ADP + phosphate + H(+)</text>
        <dbReference type="Rhea" id="RHEA:24829"/>
        <dbReference type="ChEBI" id="CHEBI:15378"/>
        <dbReference type="ChEBI" id="CHEBI:15740"/>
        <dbReference type="ChEBI" id="CHEBI:30616"/>
        <dbReference type="ChEBI" id="CHEBI:43474"/>
        <dbReference type="ChEBI" id="CHEBI:143788"/>
        <dbReference type="ChEBI" id="CHEBI:147286"/>
        <dbReference type="ChEBI" id="CHEBI:456216"/>
        <dbReference type="EC" id="6.3.1.21"/>
    </reaction>
    <physiologicalReaction direction="left-to-right" evidence="1">
        <dbReference type="Rhea" id="RHEA:24830"/>
    </physiologicalReaction>
</comment>
<comment type="pathway">
    <text evidence="1">Purine metabolism; IMP biosynthesis via de novo pathway; N(2)-formyl-N(1)-(5-phospho-D-ribosyl)glycinamide from N(1)-(5-phospho-D-ribosyl)glycinamide (formate route): step 1/1.</text>
</comment>
<comment type="subunit">
    <text evidence="1">Homodimer.</text>
</comment>
<comment type="similarity">
    <text evidence="1">Belongs to the PurK/PurT family.</text>
</comment>
<reference key="1">
    <citation type="journal article" date="2006" name="J. Bacteriol.">
        <title>Complete genome sequence of Yersinia pestis strains Antiqua and Nepal516: evidence of gene reduction in an emerging pathogen.</title>
        <authorList>
            <person name="Chain P.S.G."/>
            <person name="Hu P."/>
            <person name="Malfatti S.A."/>
            <person name="Radnedge L."/>
            <person name="Larimer F."/>
            <person name="Vergez L.M."/>
            <person name="Worsham P."/>
            <person name="Chu M.C."/>
            <person name="Andersen G.L."/>
        </authorList>
    </citation>
    <scope>NUCLEOTIDE SEQUENCE [LARGE SCALE GENOMIC DNA]</scope>
    <source>
        <strain>Nepal516</strain>
    </source>
</reference>
<reference key="2">
    <citation type="submission" date="2009-04" db="EMBL/GenBank/DDBJ databases">
        <title>Yersinia pestis Nepal516A whole genome shotgun sequencing project.</title>
        <authorList>
            <person name="Plunkett G. III"/>
            <person name="Anderson B.D."/>
            <person name="Baumler D.J."/>
            <person name="Burland V."/>
            <person name="Cabot E.L."/>
            <person name="Glasner J.D."/>
            <person name="Mau B."/>
            <person name="Neeno-Eckwall E."/>
            <person name="Perna N.T."/>
            <person name="Munk A.C."/>
            <person name="Tapia R."/>
            <person name="Green L.D."/>
            <person name="Rogers Y.C."/>
            <person name="Detter J.C."/>
            <person name="Bruce D.C."/>
            <person name="Brettin T.S."/>
        </authorList>
    </citation>
    <scope>NUCLEOTIDE SEQUENCE [LARGE SCALE GENOMIC DNA]</scope>
    <source>
        <strain>Nepal516</strain>
    </source>
</reference>
<keyword id="KW-0067">ATP-binding</keyword>
<keyword id="KW-0436">Ligase</keyword>
<keyword id="KW-0460">Magnesium</keyword>
<keyword id="KW-0479">Metal-binding</keyword>
<keyword id="KW-0547">Nucleotide-binding</keyword>
<keyword id="KW-0658">Purine biosynthesis</keyword>
<proteinExistence type="inferred from homology"/>
<name>PURT_YERPN</name>
<gene>
    <name evidence="1" type="primary">purT</name>
    <name type="ordered locus">YPN_2348</name>
    <name type="ORF">YP516_2646</name>
</gene>
<organism>
    <name type="scientific">Yersinia pestis bv. Antiqua (strain Nepal516)</name>
    <dbReference type="NCBI Taxonomy" id="377628"/>
    <lineage>
        <taxon>Bacteria</taxon>
        <taxon>Pseudomonadati</taxon>
        <taxon>Pseudomonadota</taxon>
        <taxon>Gammaproteobacteria</taxon>
        <taxon>Enterobacterales</taxon>
        <taxon>Yersiniaceae</taxon>
        <taxon>Yersinia</taxon>
    </lineage>
</organism>
<protein>
    <recommendedName>
        <fullName evidence="1">Formate-dependent phosphoribosylglycinamide formyltransferase</fullName>
        <ecNumber evidence="1">6.3.1.21</ecNumber>
    </recommendedName>
    <alternativeName>
        <fullName evidence="1">5'-phosphoribosylglycinamide transformylase 2</fullName>
    </alternativeName>
    <alternativeName>
        <fullName evidence="1">Formate-dependent GAR transformylase</fullName>
    </alternativeName>
    <alternativeName>
        <fullName evidence="1">GAR transformylase 2</fullName>
        <shortName evidence="1">GART 2</shortName>
    </alternativeName>
    <alternativeName>
        <fullName evidence="1">Non-folate glycinamide ribonucleotide transformylase</fullName>
    </alternativeName>
    <alternativeName>
        <fullName evidence="1">Phosphoribosylglycinamide formyltransferase 2</fullName>
    </alternativeName>
</protein>
<accession>Q1CH54</accession>
<accession>C4GUQ1</accession>
<evidence type="ECO:0000255" key="1">
    <source>
        <dbReference type="HAMAP-Rule" id="MF_01643"/>
    </source>
</evidence>
<dbReference type="EC" id="6.3.1.21" evidence="1"/>
<dbReference type="EMBL" id="CP000305">
    <property type="protein sequence ID" value="ABG18676.1"/>
    <property type="molecule type" value="Genomic_DNA"/>
</dbReference>
<dbReference type="EMBL" id="ACNQ01000013">
    <property type="protein sequence ID" value="EEO76438.1"/>
    <property type="molecule type" value="Genomic_DNA"/>
</dbReference>
<dbReference type="RefSeq" id="WP_002211083.1">
    <property type="nucleotide sequence ID" value="NZ_ACNQ01000013.1"/>
</dbReference>
<dbReference type="SMR" id="Q1CH54"/>
<dbReference type="GeneID" id="57976805"/>
<dbReference type="KEGG" id="ypn:YPN_2348"/>
<dbReference type="HOGENOM" id="CLU_011534_1_3_6"/>
<dbReference type="UniPathway" id="UPA00074">
    <property type="reaction ID" value="UER00127"/>
</dbReference>
<dbReference type="Proteomes" id="UP000008936">
    <property type="component" value="Chromosome"/>
</dbReference>
<dbReference type="GO" id="GO:0005829">
    <property type="term" value="C:cytosol"/>
    <property type="evidence" value="ECO:0007669"/>
    <property type="project" value="TreeGrafter"/>
</dbReference>
<dbReference type="GO" id="GO:0005524">
    <property type="term" value="F:ATP binding"/>
    <property type="evidence" value="ECO:0007669"/>
    <property type="project" value="UniProtKB-UniRule"/>
</dbReference>
<dbReference type="GO" id="GO:0000287">
    <property type="term" value="F:magnesium ion binding"/>
    <property type="evidence" value="ECO:0007669"/>
    <property type="project" value="InterPro"/>
</dbReference>
<dbReference type="GO" id="GO:0043815">
    <property type="term" value="F:phosphoribosylglycinamide formyltransferase 2 activity"/>
    <property type="evidence" value="ECO:0007669"/>
    <property type="project" value="UniProtKB-UniRule"/>
</dbReference>
<dbReference type="GO" id="GO:0004644">
    <property type="term" value="F:phosphoribosylglycinamide formyltransferase activity"/>
    <property type="evidence" value="ECO:0007669"/>
    <property type="project" value="InterPro"/>
</dbReference>
<dbReference type="GO" id="GO:0006189">
    <property type="term" value="P:'de novo' IMP biosynthetic process"/>
    <property type="evidence" value="ECO:0007669"/>
    <property type="project" value="UniProtKB-UniRule"/>
</dbReference>
<dbReference type="FunFam" id="3.30.1490.20:FF:000013">
    <property type="entry name" value="Formate-dependent phosphoribosylglycinamide formyltransferase"/>
    <property type="match status" value="1"/>
</dbReference>
<dbReference type="FunFam" id="3.30.470.20:FF:000027">
    <property type="entry name" value="Formate-dependent phosphoribosylglycinamide formyltransferase"/>
    <property type="match status" value="1"/>
</dbReference>
<dbReference type="FunFam" id="3.40.50.20:FF:000007">
    <property type="entry name" value="Formate-dependent phosphoribosylglycinamide formyltransferase"/>
    <property type="match status" value="1"/>
</dbReference>
<dbReference type="Gene3D" id="3.40.50.20">
    <property type="match status" value="1"/>
</dbReference>
<dbReference type="Gene3D" id="3.30.1490.20">
    <property type="entry name" value="ATP-grasp fold, A domain"/>
    <property type="match status" value="1"/>
</dbReference>
<dbReference type="Gene3D" id="3.30.470.20">
    <property type="entry name" value="ATP-grasp fold, B domain"/>
    <property type="match status" value="1"/>
</dbReference>
<dbReference type="HAMAP" id="MF_01643">
    <property type="entry name" value="PurT"/>
    <property type="match status" value="1"/>
</dbReference>
<dbReference type="InterPro" id="IPR011761">
    <property type="entry name" value="ATP-grasp"/>
</dbReference>
<dbReference type="InterPro" id="IPR003135">
    <property type="entry name" value="ATP-grasp_carboxylate-amine"/>
</dbReference>
<dbReference type="InterPro" id="IPR013815">
    <property type="entry name" value="ATP_grasp_subdomain_1"/>
</dbReference>
<dbReference type="InterPro" id="IPR016185">
    <property type="entry name" value="PreATP-grasp_dom_sf"/>
</dbReference>
<dbReference type="InterPro" id="IPR005862">
    <property type="entry name" value="PurT"/>
</dbReference>
<dbReference type="InterPro" id="IPR054350">
    <property type="entry name" value="PurT/PurK_preATP-grasp"/>
</dbReference>
<dbReference type="InterPro" id="IPR048740">
    <property type="entry name" value="PurT_C"/>
</dbReference>
<dbReference type="InterPro" id="IPR011054">
    <property type="entry name" value="Rudment_hybrid_motif"/>
</dbReference>
<dbReference type="NCBIfam" id="NF006766">
    <property type="entry name" value="PRK09288.1"/>
    <property type="match status" value="1"/>
</dbReference>
<dbReference type="NCBIfam" id="TIGR01142">
    <property type="entry name" value="purT"/>
    <property type="match status" value="1"/>
</dbReference>
<dbReference type="PANTHER" id="PTHR43055">
    <property type="entry name" value="FORMATE-DEPENDENT PHOSPHORIBOSYLGLYCINAMIDE FORMYLTRANSFERASE"/>
    <property type="match status" value="1"/>
</dbReference>
<dbReference type="PANTHER" id="PTHR43055:SF1">
    <property type="entry name" value="FORMATE-DEPENDENT PHOSPHORIBOSYLGLYCINAMIDE FORMYLTRANSFERASE"/>
    <property type="match status" value="1"/>
</dbReference>
<dbReference type="Pfam" id="PF02222">
    <property type="entry name" value="ATP-grasp"/>
    <property type="match status" value="1"/>
</dbReference>
<dbReference type="Pfam" id="PF21244">
    <property type="entry name" value="PurT_C"/>
    <property type="match status" value="1"/>
</dbReference>
<dbReference type="Pfam" id="PF22660">
    <property type="entry name" value="RS_preATP-grasp-like"/>
    <property type="match status" value="1"/>
</dbReference>
<dbReference type="SUPFAM" id="SSF56059">
    <property type="entry name" value="Glutathione synthetase ATP-binding domain-like"/>
    <property type="match status" value="1"/>
</dbReference>
<dbReference type="SUPFAM" id="SSF52440">
    <property type="entry name" value="PreATP-grasp domain"/>
    <property type="match status" value="1"/>
</dbReference>
<dbReference type="SUPFAM" id="SSF51246">
    <property type="entry name" value="Rudiment single hybrid motif"/>
    <property type="match status" value="1"/>
</dbReference>
<dbReference type="PROSITE" id="PS50975">
    <property type="entry name" value="ATP_GRASP"/>
    <property type="match status" value="1"/>
</dbReference>
<sequence length="393" mass="42511">MLTIGTALRPGATRVMLLGAGELGKEVAIECQRLGLEVIAVDRYADAPAMHVAHRSHVINMLDGAALKQLVAQEKPHYIVPEIEAIATDMLVELEKMGQHVVPCAEATRLTMNREGIRRLAAETLQLPTSSYRFADTDSAFFQAVRDIGYPCIVKPVMSSSGKGQSLIRSEEHLQAAWEYAQQGGRAGSGRVIIEGLVHFDFEITLLTIRAVDGIHFCAPIGHRQEDGDYRESWQPQAMSDIALQRAKEISAQVVTALGGFGLFGVELFVCGDDVIFSEVSPRPHDTGMVTLISQNMSEFALHVRAFLGLPIGTIRQYGAAASAVILPELTSQNITYRGLETALIGDTQIRLFGKPEIAGKRRLGVALAVADNIETAIEVAKKAAGNIEVSGE</sequence>
<feature type="chain" id="PRO_0000319273" description="Formate-dependent phosphoribosylglycinamide formyltransferase">
    <location>
        <begin position="1"/>
        <end position="393"/>
    </location>
</feature>
<feature type="domain" description="ATP-grasp" evidence="1">
    <location>
        <begin position="119"/>
        <end position="308"/>
    </location>
</feature>
<feature type="binding site" evidence="1">
    <location>
        <begin position="22"/>
        <end position="23"/>
    </location>
    <ligand>
        <name>N(1)-(5-phospho-beta-D-ribosyl)glycinamide</name>
        <dbReference type="ChEBI" id="CHEBI:143788"/>
    </ligand>
</feature>
<feature type="binding site" evidence="1">
    <location>
        <position position="82"/>
    </location>
    <ligand>
        <name>N(1)-(5-phospho-beta-D-ribosyl)glycinamide</name>
        <dbReference type="ChEBI" id="CHEBI:143788"/>
    </ligand>
</feature>
<feature type="binding site" evidence="1">
    <location>
        <position position="114"/>
    </location>
    <ligand>
        <name>ATP</name>
        <dbReference type="ChEBI" id="CHEBI:30616"/>
    </ligand>
</feature>
<feature type="binding site" evidence="1">
    <location>
        <position position="155"/>
    </location>
    <ligand>
        <name>ATP</name>
        <dbReference type="ChEBI" id="CHEBI:30616"/>
    </ligand>
</feature>
<feature type="binding site" evidence="1">
    <location>
        <begin position="160"/>
        <end position="165"/>
    </location>
    <ligand>
        <name>ATP</name>
        <dbReference type="ChEBI" id="CHEBI:30616"/>
    </ligand>
</feature>
<feature type="binding site" evidence="1">
    <location>
        <begin position="195"/>
        <end position="198"/>
    </location>
    <ligand>
        <name>ATP</name>
        <dbReference type="ChEBI" id="CHEBI:30616"/>
    </ligand>
</feature>
<feature type="binding site" evidence="1">
    <location>
        <position position="203"/>
    </location>
    <ligand>
        <name>ATP</name>
        <dbReference type="ChEBI" id="CHEBI:30616"/>
    </ligand>
</feature>
<feature type="binding site" evidence="1">
    <location>
        <position position="267"/>
    </location>
    <ligand>
        <name>Mg(2+)</name>
        <dbReference type="ChEBI" id="CHEBI:18420"/>
    </ligand>
</feature>
<feature type="binding site" evidence="1">
    <location>
        <position position="279"/>
    </location>
    <ligand>
        <name>Mg(2+)</name>
        <dbReference type="ChEBI" id="CHEBI:18420"/>
    </ligand>
</feature>
<feature type="binding site" evidence="1">
    <location>
        <position position="286"/>
    </location>
    <ligand>
        <name>N(1)-(5-phospho-beta-D-ribosyl)glycinamide</name>
        <dbReference type="ChEBI" id="CHEBI:143788"/>
    </ligand>
</feature>
<feature type="binding site" evidence="1">
    <location>
        <position position="355"/>
    </location>
    <ligand>
        <name>N(1)-(5-phospho-beta-D-ribosyl)glycinamide</name>
        <dbReference type="ChEBI" id="CHEBI:143788"/>
    </ligand>
</feature>
<feature type="binding site" evidence="1">
    <location>
        <begin position="362"/>
        <end position="363"/>
    </location>
    <ligand>
        <name>N(1)-(5-phospho-beta-D-ribosyl)glycinamide</name>
        <dbReference type="ChEBI" id="CHEBI:143788"/>
    </ligand>
</feature>